<protein>
    <recommendedName>
        <fullName>Ubiquitin-conjugating enzyme E2 R1</fullName>
        <ecNumber evidence="1">2.3.2.23</ecNumber>
    </recommendedName>
    <alternativeName>
        <fullName>(E3-independent) E2 ubiquitin-conjugating enzyme R1</fullName>
        <ecNumber evidence="1">2.3.2.24</ecNumber>
    </alternativeName>
    <alternativeName>
        <fullName>E2 ubiquitin-conjugating enzyme R1</fullName>
    </alternativeName>
    <alternativeName>
        <fullName>Ubiquitin-conjugating enzyme E2-32 kDa complementing</fullName>
    </alternativeName>
    <alternativeName>
        <fullName>Ubiquitin-conjugating enzyme E2-CDC34</fullName>
    </alternativeName>
    <alternativeName>
        <fullName>Ubiquitin-protein ligase R1</fullName>
    </alternativeName>
</protein>
<sequence>MARPLVPSSQKALLLELKGLQEEPVEGFRVTLVDEGDLYNWEVAIFGPPNTYYEGGYFKARLKFPIDYPYSPPAFRFLTKMWHPNIYETGDVCISILHPPVDDPQSGELPSERWNPTQNVRTILLSVISLLNEPNTFSPANVDASVMYRKWKESKGKDREYTDIIRKQVLGTKVDAERDGVKVPTTLAEYCVKTKAPAPDEGSDLFYDDYYEDGEVEEADSCFGDEEDDSGTEES</sequence>
<evidence type="ECO:0000250" key="1">
    <source>
        <dbReference type="UniProtKB" id="P49427"/>
    </source>
</evidence>
<evidence type="ECO:0000255" key="2">
    <source>
        <dbReference type="PROSITE-ProRule" id="PRU00388"/>
    </source>
</evidence>
<evidence type="ECO:0000255" key="3">
    <source>
        <dbReference type="PROSITE-ProRule" id="PRU10133"/>
    </source>
</evidence>
<evidence type="ECO:0000269" key="4">
    <source>
    </source>
</evidence>
<evidence type="ECO:0000269" key="5">
    <source>
    </source>
</evidence>
<organism>
    <name type="scientific">Mus musculus</name>
    <name type="common">Mouse</name>
    <dbReference type="NCBI Taxonomy" id="10090"/>
    <lineage>
        <taxon>Eukaryota</taxon>
        <taxon>Metazoa</taxon>
        <taxon>Chordata</taxon>
        <taxon>Craniata</taxon>
        <taxon>Vertebrata</taxon>
        <taxon>Euteleostomi</taxon>
        <taxon>Mammalia</taxon>
        <taxon>Eutheria</taxon>
        <taxon>Euarchontoglires</taxon>
        <taxon>Glires</taxon>
        <taxon>Rodentia</taxon>
        <taxon>Myomorpha</taxon>
        <taxon>Muroidea</taxon>
        <taxon>Muridae</taxon>
        <taxon>Murinae</taxon>
        <taxon>Mus</taxon>
        <taxon>Mus</taxon>
    </lineage>
</organism>
<name>UB2R1_MOUSE</name>
<keyword id="KW-0067">ATP-binding</keyword>
<keyword id="KW-0131">Cell cycle</keyword>
<keyword id="KW-0963">Cytoplasm</keyword>
<keyword id="KW-0547">Nucleotide-binding</keyword>
<keyword id="KW-0539">Nucleus</keyword>
<keyword id="KW-0597">Phosphoprotein</keyword>
<keyword id="KW-1185">Reference proteome</keyword>
<keyword id="KW-0808">Transferase</keyword>
<keyword id="KW-0833">Ubl conjugation pathway</keyword>
<dbReference type="EC" id="2.3.2.23" evidence="1"/>
<dbReference type="EC" id="2.3.2.24" evidence="1"/>
<dbReference type="EMBL" id="BC039160">
    <property type="protein sequence ID" value="AAH39160.1"/>
    <property type="molecule type" value="mRNA"/>
</dbReference>
<dbReference type="EMBL" id="BC094502">
    <property type="protein sequence ID" value="AAH94502.1"/>
    <property type="molecule type" value="mRNA"/>
</dbReference>
<dbReference type="CCDS" id="CCDS23983.1"/>
<dbReference type="RefSeq" id="NP_808281.1">
    <property type="nucleotide sequence ID" value="NM_177613.2"/>
</dbReference>
<dbReference type="RefSeq" id="XP_017169376.1">
    <property type="nucleotide sequence ID" value="XM_017313887.2"/>
</dbReference>
<dbReference type="RefSeq" id="XP_017169377.1">
    <property type="nucleotide sequence ID" value="XM_017313888.3"/>
</dbReference>
<dbReference type="SMR" id="Q8CFI2"/>
<dbReference type="BioGRID" id="229706">
    <property type="interactions" value="4"/>
</dbReference>
<dbReference type="FunCoup" id="Q8CFI2">
    <property type="interactions" value="1314"/>
</dbReference>
<dbReference type="IntAct" id="Q8CFI2">
    <property type="interactions" value="3"/>
</dbReference>
<dbReference type="STRING" id="10090.ENSMUSP00000020550"/>
<dbReference type="GlyGen" id="Q8CFI2">
    <property type="glycosylation" value="1 site, 1 O-linked glycan (1 site)"/>
</dbReference>
<dbReference type="iPTMnet" id="Q8CFI2"/>
<dbReference type="PhosphoSitePlus" id="Q8CFI2"/>
<dbReference type="SwissPalm" id="Q8CFI2"/>
<dbReference type="PaxDb" id="10090-ENSMUSP00000020550"/>
<dbReference type="PeptideAtlas" id="Q8CFI2"/>
<dbReference type="ProteomicsDB" id="298350"/>
<dbReference type="Pumba" id="Q8CFI2"/>
<dbReference type="DNASU" id="216150"/>
<dbReference type="Ensembl" id="ENSMUST00000020550.13">
    <property type="protein sequence ID" value="ENSMUSP00000020550.6"/>
    <property type="gene ID" value="ENSMUSG00000020307.17"/>
</dbReference>
<dbReference type="GeneID" id="216150"/>
<dbReference type="KEGG" id="mmu:216150"/>
<dbReference type="UCSC" id="uc007fzi.1">
    <property type="organism name" value="mouse"/>
</dbReference>
<dbReference type="AGR" id="MGI:102657"/>
<dbReference type="CTD" id="997"/>
<dbReference type="MGI" id="MGI:102657">
    <property type="gene designation" value="Cdc34"/>
</dbReference>
<dbReference type="VEuPathDB" id="HostDB:ENSMUSG00000020307"/>
<dbReference type="eggNOG" id="KOG0425">
    <property type="taxonomic scope" value="Eukaryota"/>
</dbReference>
<dbReference type="GeneTree" id="ENSGT00940000160356"/>
<dbReference type="HOGENOM" id="CLU_030988_1_2_1"/>
<dbReference type="InParanoid" id="Q8CFI2"/>
<dbReference type="OMA" id="VNSCYGD"/>
<dbReference type="OrthoDB" id="19692at2759"/>
<dbReference type="PhylomeDB" id="Q8CFI2"/>
<dbReference type="TreeFam" id="TF101107"/>
<dbReference type="Reactome" id="R-MMU-202424">
    <property type="pathway name" value="Downstream TCR signaling"/>
</dbReference>
<dbReference type="Reactome" id="R-MMU-2871837">
    <property type="pathway name" value="FCERI mediated NF-kB activation"/>
</dbReference>
<dbReference type="Reactome" id="R-MMU-5607764">
    <property type="pathway name" value="CLEC7A (Dectin-1) signaling"/>
</dbReference>
<dbReference type="Reactome" id="R-MMU-8866652">
    <property type="pathway name" value="Synthesis of active ubiquitin: roles of E1 and E2 enzymes"/>
</dbReference>
<dbReference type="Reactome" id="R-MMU-983168">
    <property type="pathway name" value="Antigen processing: Ubiquitination &amp; Proteasome degradation"/>
</dbReference>
<dbReference type="UniPathway" id="UPA00143"/>
<dbReference type="BioGRID-ORCS" id="216150">
    <property type="hits" value="2 hits in 80 CRISPR screens"/>
</dbReference>
<dbReference type="ChiTaRS" id="Cdc34">
    <property type="organism name" value="mouse"/>
</dbReference>
<dbReference type="PRO" id="PR:Q8CFI2"/>
<dbReference type="Proteomes" id="UP000000589">
    <property type="component" value="Chromosome 10"/>
</dbReference>
<dbReference type="RNAct" id="Q8CFI2">
    <property type="molecule type" value="protein"/>
</dbReference>
<dbReference type="Bgee" id="ENSMUSG00000020307">
    <property type="expression patterns" value="Expressed in quadriceps femoris and 70 other cell types or tissues"/>
</dbReference>
<dbReference type="ExpressionAtlas" id="Q8CFI2">
    <property type="expression patterns" value="baseline and differential"/>
</dbReference>
<dbReference type="GO" id="GO:0005737">
    <property type="term" value="C:cytoplasm"/>
    <property type="evidence" value="ECO:0007669"/>
    <property type="project" value="UniProtKB-SubCell"/>
</dbReference>
<dbReference type="GO" id="GO:0005634">
    <property type="term" value="C:nucleus"/>
    <property type="evidence" value="ECO:0007669"/>
    <property type="project" value="UniProtKB-SubCell"/>
</dbReference>
<dbReference type="GO" id="GO:0005524">
    <property type="term" value="F:ATP binding"/>
    <property type="evidence" value="ECO:0007669"/>
    <property type="project" value="UniProtKB-KW"/>
</dbReference>
<dbReference type="GO" id="GO:0061631">
    <property type="term" value="F:ubiquitin conjugating enzyme activity"/>
    <property type="evidence" value="ECO:0000314"/>
    <property type="project" value="MGI"/>
</dbReference>
<dbReference type="GO" id="GO:0004842">
    <property type="term" value="F:ubiquitin-protein transferase activity"/>
    <property type="evidence" value="ECO:0000250"/>
    <property type="project" value="UniProtKB"/>
</dbReference>
<dbReference type="GO" id="GO:0043161">
    <property type="term" value="P:proteasome-mediated ubiquitin-dependent protein catabolic process"/>
    <property type="evidence" value="ECO:0000250"/>
    <property type="project" value="UniProtKB"/>
</dbReference>
<dbReference type="GO" id="GO:0070936">
    <property type="term" value="P:protein K48-linked ubiquitination"/>
    <property type="evidence" value="ECO:0000250"/>
    <property type="project" value="UniProtKB"/>
</dbReference>
<dbReference type="GO" id="GO:0006513">
    <property type="term" value="P:protein monoubiquitination"/>
    <property type="evidence" value="ECO:0000250"/>
    <property type="project" value="UniProtKB"/>
</dbReference>
<dbReference type="CDD" id="cd23803">
    <property type="entry name" value="UBCc_UBE2R"/>
    <property type="match status" value="1"/>
</dbReference>
<dbReference type="FunFam" id="3.10.110.10:FF:000009">
    <property type="entry name" value="Ubiquitin-conjugating enzyme E2 R2"/>
    <property type="match status" value="1"/>
</dbReference>
<dbReference type="Gene3D" id="3.10.110.10">
    <property type="entry name" value="Ubiquitin Conjugating Enzyme"/>
    <property type="match status" value="1"/>
</dbReference>
<dbReference type="InterPro" id="IPR050113">
    <property type="entry name" value="Ub_conjugating_enzyme"/>
</dbReference>
<dbReference type="InterPro" id="IPR000608">
    <property type="entry name" value="UBQ-conjugat_E2_core"/>
</dbReference>
<dbReference type="InterPro" id="IPR023313">
    <property type="entry name" value="UBQ-conjugating_AS"/>
</dbReference>
<dbReference type="InterPro" id="IPR016135">
    <property type="entry name" value="UBQ-conjugating_enzyme/RWD"/>
</dbReference>
<dbReference type="PANTHER" id="PTHR24067">
    <property type="entry name" value="UBIQUITIN-CONJUGATING ENZYME E2"/>
    <property type="match status" value="1"/>
</dbReference>
<dbReference type="Pfam" id="PF00179">
    <property type="entry name" value="UQ_con"/>
    <property type="match status" value="1"/>
</dbReference>
<dbReference type="SMART" id="SM00212">
    <property type="entry name" value="UBCc"/>
    <property type="match status" value="1"/>
</dbReference>
<dbReference type="SUPFAM" id="SSF54495">
    <property type="entry name" value="UBC-like"/>
    <property type="match status" value="1"/>
</dbReference>
<dbReference type="PROSITE" id="PS00183">
    <property type="entry name" value="UBC_1"/>
    <property type="match status" value="1"/>
</dbReference>
<dbReference type="PROSITE" id="PS50127">
    <property type="entry name" value="UBC_2"/>
    <property type="match status" value="1"/>
</dbReference>
<accession>Q8CFI2</accession>
<accession>Q505K8</accession>
<proteinExistence type="evidence at protein level"/>
<gene>
    <name type="primary">Cdc34</name>
    <name type="synonym">Ubch3</name>
    <name type="synonym">Ube2r1</name>
</gene>
<reference key="1">
    <citation type="journal article" date="2004" name="Genome Res.">
        <title>The status, quality, and expansion of the NIH full-length cDNA project: the Mammalian Gene Collection (MGC).</title>
        <authorList>
            <consortium name="The MGC Project Team"/>
        </authorList>
    </citation>
    <scope>NUCLEOTIDE SEQUENCE [LARGE SCALE MRNA]</scope>
    <source>
        <strain>129</strain>
        <strain>C57BL/6J</strain>
        <tissue>Mammary tumor</tissue>
    </source>
</reference>
<reference key="2">
    <citation type="journal article" date="1999" name="Mol. Cell">
        <title>Recruitment of a ROC1-CUL1 ubiquitin ligase by Skp1 and HOS to catalyze the ubiquitination of I kappa B alpha.</title>
        <authorList>
            <person name="Tan P."/>
            <person name="Fuchs S.Y."/>
            <person name="Chen A."/>
            <person name="Wu K."/>
            <person name="Gomez C."/>
            <person name="Ronai Z."/>
            <person name="Pan Z.-Q."/>
        </authorList>
    </citation>
    <scope>INTERACTION WITH SCF COMPLEX</scope>
    <scope>FUNCTION</scope>
</reference>
<reference key="3">
    <citation type="journal article" date="2010" name="Cell">
        <title>A tissue-specific atlas of mouse protein phosphorylation and expression.</title>
        <authorList>
            <person name="Huttlin E.L."/>
            <person name="Jedrychowski M.P."/>
            <person name="Elias J.E."/>
            <person name="Goswami T."/>
            <person name="Rad R."/>
            <person name="Beausoleil S.A."/>
            <person name="Villen J."/>
            <person name="Haas W."/>
            <person name="Sowa M.E."/>
            <person name="Gygi S.P."/>
        </authorList>
    </citation>
    <scope>IDENTIFICATION BY MASS SPECTROMETRY [LARGE SCALE ANALYSIS]</scope>
    <source>
        <tissue>Testis</tissue>
    </source>
</reference>
<reference key="4">
    <citation type="journal article" date="2020" name="Cell Rep.">
        <title>Cyclin N-Terminal Domain-Containing-1 Coordinates Meiotic Crossover Formation with Cell-Cycle Progression in a Cyclin-Independent Manner.</title>
        <authorList>
            <person name="Gray S."/>
            <person name="Santiago E.R."/>
            <person name="Chappie J.S."/>
            <person name="Cohen P.E."/>
        </authorList>
    </citation>
    <scope>INTERACTION WITH CNTD1</scope>
</reference>
<comment type="function">
    <text evidence="1 4">E2 ubiquitin-conjugating enzyme that accepts ubiquitin from an E1 ubiquitin-activating protein, and catalyzes its covalent attachment to other proteins by an E3 ubiquitin-protein ligase complex (By similarity). In vitro catalyzes 'Lys-48'-linked polyubiquitination (By similarity). Cooperates with the E2 UBCH5C and the SCF(FBXW11) E3 ligase complex for the polyubiquitination of NFKBIA leading to its subsequent proteasomal degradation (PubMed:10230406). Performs ubiquitin chain elongation building ubiquitin chains from the UBE2D3-primed NFKBIA-linked ubiquitin. UBE2D3 acts as an initiator E2, priming the phosphorylated NFKBIA target at positions 'Lys-21' and/or 'Lys-22' with a monoubiquitin. Cooperates with the SCF(SKP2) E3 ligase complex to regulate cell proliferation through ubiquitination and degradation of MYBL2 and KIP1 (By similarity). Involved in ubiquitin conjugation and degradation of CREM isoform ICERIIgamma and ATF15 resulting in abrogation of ICERIIgamma- and ATF5-mediated repression of cAMP-induced transcription during both meiotic and mitotic cell cycles. Involved in the regulation of the cell cycle G2/M phase through its targeting of the WEE1 kinase for ubiquitination and degradation (By similarity). Also involved in the degradation of beta-catenin (By similarity).</text>
</comment>
<comment type="catalytic activity">
    <reaction evidence="1">
        <text>S-ubiquitinyl-[E1 ubiquitin-activating enzyme]-L-cysteine + [E2 ubiquitin-conjugating enzyme]-L-cysteine = [E1 ubiquitin-activating enzyme]-L-cysteine + S-ubiquitinyl-[E2 ubiquitin-conjugating enzyme]-L-cysteine.</text>
        <dbReference type="EC" id="2.3.2.23"/>
    </reaction>
</comment>
<comment type="catalytic activity">
    <reaction evidence="1">
        <text>S-ubiquitinyl-[E1 ubiquitin-activating enzyme]-L-cysteine + [acceptor protein]-L-lysine = [E1 ubiquitin-activating enzyme]-L-cysteine + N(6)-monoubiquitinyl-[acceptor protein]-L-lysine.</text>
        <dbReference type="EC" id="2.3.2.24"/>
    </reaction>
</comment>
<comment type="activity regulation">
    <text evidence="1">CDC34-catalyzed polyubiquitin chain assembly activity is stimulated by the conjugation of NEDD8 to the CUL1 SCF E3 ligase complex subunit.</text>
</comment>
<comment type="pathway">
    <text evidence="1">Protein modification; protein ubiquitination.</text>
</comment>
<comment type="subunit">
    <text evidence="1 5">Interacts with multiple Cul1-RING E3 ubiquitin-protein ligase complexes, also known as SCF (SKP1-CUL1-F-box protein) complexes (By similarity). Identified in a SCF (SKP1-CUL1-F-box protein) E3 ubiquitin ligase complex together with HINT1 and RBX1. When cullin is neddylated, the interaction between the E2 and the SCF complex is strengthened (By similarity). Interacts with multiple Cul2-RING (CRL2) E3 ubiquitin-protein ligase complexes, also known as ECS (Elongin BC-CUL2/5-SOCS-box protein) complexes (By similarity). When phosphorylated, interacts with beta-TrCP (BTRC) (By similarity). Interacts with casein kinase subunit CSNK2B (By similarity). Interacts with CNTD1; this interaction regulates the cell-cycle progression (PubMed:32640224).</text>
</comment>
<comment type="subcellular location">
    <subcellularLocation>
        <location evidence="1">Cytoplasm</location>
    </subcellularLocation>
    <subcellularLocation>
        <location evidence="1">Nucleus</location>
    </subcellularLocation>
    <text evidence="1">The phosphorylation of the C-terminal tail plays an important role in mediating nuclear localization. Colocalizes with beta-tubulin on mitotic spindles in anaphase.</text>
</comment>
<comment type="domain">
    <text evidence="1">The C-terminal acidic tail is required for nuclear localization and is involved in the binding to SCF E3 ligase complexes, and more specifically with the CUL1 subunit.</text>
</comment>
<comment type="PTM">
    <text evidence="1">Phosphorylated by CK2. Phosphorylation of the C-terminal tail by CK2 controls the nuclear localization.</text>
</comment>
<comment type="similarity">
    <text evidence="2">Belongs to the ubiquitin-conjugating enzyme family.</text>
</comment>
<feature type="chain" id="PRO_0000082452" description="Ubiquitin-conjugating enzyme E2 R1">
    <location>
        <begin position="1"/>
        <end position="235"/>
    </location>
</feature>
<feature type="domain" description="UBC core" evidence="2">
    <location>
        <begin position="8"/>
        <end position="174"/>
    </location>
</feature>
<feature type="region of interest" description="Important for ubiquitin transfer" evidence="1">
    <location>
        <begin position="98"/>
        <end position="113"/>
    </location>
</feature>
<feature type="region of interest" description="SCF-binding" evidence="1">
    <location>
        <begin position="190"/>
        <end position="235"/>
    </location>
</feature>
<feature type="active site" description="Glycyl thioester intermediate" evidence="2 3">
    <location>
        <position position="93"/>
    </location>
</feature>
<feature type="modified residue" description="Phosphoserine; by CK2" evidence="1">
    <location>
        <position position="203"/>
    </location>
</feature>
<feature type="modified residue" description="Phosphoserine; by CK2" evidence="1">
    <location>
        <position position="221"/>
    </location>
</feature>
<feature type="modified residue" description="Phosphoserine; by CK2" evidence="1">
    <location>
        <position position="230"/>
    </location>
</feature>
<feature type="modified residue" description="Phosphothreonine; by CK2" evidence="1">
    <location>
        <position position="232"/>
    </location>
</feature>
<feature type="modified residue" description="Phosphoserine; by CK2" evidence="1">
    <location>
        <position position="235"/>
    </location>
</feature>